<organism>
    <name type="scientific">Staphylococcus aureus (strain Mu50 / ATCC 700699)</name>
    <dbReference type="NCBI Taxonomy" id="158878"/>
    <lineage>
        <taxon>Bacteria</taxon>
        <taxon>Bacillati</taxon>
        <taxon>Bacillota</taxon>
        <taxon>Bacilli</taxon>
        <taxon>Bacillales</taxon>
        <taxon>Staphylococcaceae</taxon>
        <taxon>Staphylococcus</taxon>
    </lineage>
</organism>
<dbReference type="EC" id="1.2.4.2" evidence="1"/>
<dbReference type="EMBL" id="AJ564529">
    <property type="protein sequence ID" value="CAD92196.1"/>
    <property type="molecule type" value="Genomic_DNA"/>
</dbReference>
<dbReference type="EMBL" id="BA000017">
    <property type="protein sequence ID" value="BAB57575.2"/>
    <property type="molecule type" value="Genomic_DNA"/>
</dbReference>
<dbReference type="RefSeq" id="WP_000180673.1">
    <property type="nucleotide sequence ID" value="NC_002758.2"/>
</dbReference>
<dbReference type="SMR" id="Q931R8"/>
<dbReference type="KEGG" id="sav:SAV1413"/>
<dbReference type="HOGENOM" id="CLU_004709_1_0_9"/>
<dbReference type="PhylomeDB" id="Q931R8"/>
<dbReference type="Proteomes" id="UP000002481">
    <property type="component" value="Chromosome"/>
</dbReference>
<dbReference type="GO" id="GO:0005829">
    <property type="term" value="C:cytosol"/>
    <property type="evidence" value="ECO:0007669"/>
    <property type="project" value="TreeGrafter"/>
</dbReference>
<dbReference type="GO" id="GO:0045252">
    <property type="term" value="C:oxoglutarate dehydrogenase complex"/>
    <property type="evidence" value="ECO:0007669"/>
    <property type="project" value="TreeGrafter"/>
</dbReference>
<dbReference type="GO" id="GO:0004591">
    <property type="term" value="F:oxoglutarate dehydrogenase (succinyl-transferring) activity"/>
    <property type="evidence" value="ECO:0007669"/>
    <property type="project" value="UniProtKB-UniRule"/>
</dbReference>
<dbReference type="GO" id="GO:0030976">
    <property type="term" value="F:thiamine pyrophosphate binding"/>
    <property type="evidence" value="ECO:0007669"/>
    <property type="project" value="UniProtKB-UniRule"/>
</dbReference>
<dbReference type="GO" id="GO:0006096">
    <property type="term" value="P:glycolytic process"/>
    <property type="evidence" value="ECO:0007669"/>
    <property type="project" value="UniProtKB-UniRule"/>
</dbReference>
<dbReference type="GO" id="GO:0006099">
    <property type="term" value="P:tricarboxylic acid cycle"/>
    <property type="evidence" value="ECO:0007669"/>
    <property type="project" value="TreeGrafter"/>
</dbReference>
<dbReference type="CDD" id="cd02016">
    <property type="entry name" value="TPP_E1_OGDC_like"/>
    <property type="match status" value="1"/>
</dbReference>
<dbReference type="FunFam" id="3.40.50.11610:FF:000002">
    <property type="entry name" value="2-oxoglutarate dehydrogenase E1 component"/>
    <property type="match status" value="1"/>
</dbReference>
<dbReference type="FunFam" id="3.40.50.970:FF:000036">
    <property type="entry name" value="2-oxoglutarate dehydrogenase E1 component"/>
    <property type="match status" value="1"/>
</dbReference>
<dbReference type="Gene3D" id="3.40.50.12470">
    <property type="match status" value="1"/>
</dbReference>
<dbReference type="Gene3D" id="3.40.50.970">
    <property type="match status" value="1"/>
</dbReference>
<dbReference type="Gene3D" id="3.40.50.11610">
    <property type="entry name" value="Multifunctional 2-oxoglutarate metabolism enzyme, C-terminal domain"/>
    <property type="match status" value="1"/>
</dbReference>
<dbReference type="Gene3D" id="1.10.287.1150">
    <property type="entry name" value="TPP helical domain"/>
    <property type="match status" value="1"/>
</dbReference>
<dbReference type="HAMAP" id="MF_01169">
    <property type="entry name" value="SucA_OdhA"/>
    <property type="match status" value="1"/>
</dbReference>
<dbReference type="InterPro" id="IPR011603">
    <property type="entry name" value="2oxoglutarate_DH_E1"/>
</dbReference>
<dbReference type="InterPro" id="IPR023784">
    <property type="entry name" value="2oxoglutarate_DH_E1_bac"/>
</dbReference>
<dbReference type="InterPro" id="IPR001017">
    <property type="entry name" value="DH_E1"/>
</dbReference>
<dbReference type="InterPro" id="IPR042179">
    <property type="entry name" value="KGD_C_sf"/>
</dbReference>
<dbReference type="InterPro" id="IPR031717">
    <property type="entry name" value="ODO-1/KGD_C"/>
</dbReference>
<dbReference type="InterPro" id="IPR029061">
    <property type="entry name" value="THDP-binding"/>
</dbReference>
<dbReference type="InterPro" id="IPR005475">
    <property type="entry name" value="Transketolase-like_Pyr-bd"/>
</dbReference>
<dbReference type="NCBIfam" id="TIGR00239">
    <property type="entry name" value="2oxo_dh_E1"/>
    <property type="match status" value="1"/>
</dbReference>
<dbReference type="NCBIfam" id="NF006914">
    <property type="entry name" value="PRK09404.1"/>
    <property type="match status" value="1"/>
</dbReference>
<dbReference type="NCBIfam" id="NF008907">
    <property type="entry name" value="PRK12270.1"/>
    <property type="match status" value="1"/>
</dbReference>
<dbReference type="PANTHER" id="PTHR23152:SF4">
    <property type="entry name" value="2-OXOADIPATE DEHYDROGENASE COMPLEX COMPONENT E1"/>
    <property type="match status" value="1"/>
</dbReference>
<dbReference type="PANTHER" id="PTHR23152">
    <property type="entry name" value="2-OXOGLUTARATE DEHYDROGENASE"/>
    <property type="match status" value="1"/>
</dbReference>
<dbReference type="Pfam" id="PF00676">
    <property type="entry name" value="E1_dh"/>
    <property type="match status" value="1"/>
</dbReference>
<dbReference type="Pfam" id="PF16870">
    <property type="entry name" value="OxoGdeHyase_C"/>
    <property type="match status" value="1"/>
</dbReference>
<dbReference type="Pfam" id="PF02779">
    <property type="entry name" value="Transket_pyr"/>
    <property type="match status" value="1"/>
</dbReference>
<dbReference type="PIRSF" id="PIRSF000157">
    <property type="entry name" value="Oxoglu_dh_E1"/>
    <property type="match status" value="1"/>
</dbReference>
<dbReference type="SMART" id="SM00861">
    <property type="entry name" value="Transket_pyr"/>
    <property type="match status" value="1"/>
</dbReference>
<dbReference type="SUPFAM" id="SSF52518">
    <property type="entry name" value="Thiamin diphosphate-binding fold (THDP-binding)"/>
    <property type="match status" value="2"/>
</dbReference>
<sequence>MTNERKEVSEAPVNFGANLGLMLDLYDDFLQDPSSVPEDLQVLFSTIKNDDSIVPALKSTSSQNSDGTIKRVMRLIDNIRQYGHLKADIYPVNPPKRKHVPKLEIEDFDLDQQTLEGISAGIVSDHFADIYDNAYEAILRMEKRYKGPIAFEYTHINNNTERGWLKRRIETPYKVTLNNNEKRALFKQLAYVEGFEKYLHKNFVGAKRFSIEGVDALVPMLQRTITIAAKEGIKNIQIGMAHRGRLNVLTHVLEKPYEMMISEFMHTDPMKFLPEDGSLQLTAGWTGDVKYHLGGIKTTDSYGTMQRIALANNPSHLEIVAPVVEGRTRAAQDDTQRAGAPTTDHHKAMPIIIHGDAAYPGQGINFETMNLGNLKGYSTGGSLHIITNNRIGFTTEPIDARSTTYSTDVAKGYDVPIFHVNADDVEATIEAIDIAMEFRKEFHKDVVIDLVGYRRFGHNEMDEPSITNPVPYQNIRKHDSVEYVFGKKLVNEGVISEDEMHSFIEQVQKELRQAHDKINKADKMDNPDMEKPAELALPLQADEQSFTFDHLKEINDALLTYPDGFNILKKLNKVLEKRHEPFNKEDGLVDWAQAEQLAFATILQDGTPIRLTGQDSERGTFSHRHAVLHDEQTGETYTPLHHVPDQKATFDIHNSPLSEAAVVGFEYGYNVENKKSFNIWEAQYGDFANMSQMIFDNFLFSSRSKWGERSGLTLFLPHAYEGQGPEHSSARLERFLQLAAENNCTVVNLSSSSNYFHLLRAQAASLDSEQMRPLVVMSPKSLLRNKTVAKPIDEFTSGGFEPILTESYQADKVTKVILATGKMFIDLKEALAKNPDESVLLVAIERLYPFPEEEIEALLAQLPNLEEVSWVQEEPKNQGAWLYVYPYVKVLVADKYDLSYHGRIQRAAPAEGDGEIHKLVQNKIIENALKNN</sequence>
<evidence type="ECO:0000255" key="1">
    <source>
        <dbReference type="HAMAP-Rule" id="MF_01169"/>
    </source>
</evidence>
<evidence type="ECO:0000305" key="2"/>
<gene>
    <name evidence="1" type="primary">odhA</name>
    <name type="ordered locus">SAV1413</name>
</gene>
<feature type="chain" id="PRO_0000162177" description="2-oxoglutarate dehydrogenase E1 component">
    <location>
        <begin position="1"/>
        <end position="932"/>
    </location>
</feature>
<feature type="sequence conflict" description="In Ref. 1; CAD92196." evidence="2" ref="1">
    <original>T</original>
    <variation>I</variation>
    <location>
        <position position="46"/>
    </location>
</feature>
<feature type="sequence conflict" description="In Ref. 1; CAD92196." evidence="2" ref="1">
    <original>N</original>
    <variation>K</variation>
    <location>
        <position position="864"/>
    </location>
</feature>
<keyword id="KW-0324">Glycolysis</keyword>
<keyword id="KW-0560">Oxidoreductase</keyword>
<keyword id="KW-0786">Thiamine pyrophosphate</keyword>
<comment type="function">
    <text evidence="1">E1 component of the 2-oxoglutarate dehydrogenase (OGDH) complex which catalyzes the decarboxylation of 2-oxoglutarate, the first step in the conversion of 2-oxoglutarate to succinyl-CoA and CO(2).</text>
</comment>
<comment type="catalytic activity">
    <reaction evidence="1">
        <text>N(6)-[(R)-lipoyl]-L-lysyl-[protein] + 2-oxoglutarate + H(+) = N(6)-[(R)-S(8)-succinyldihydrolipoyl]-L-lysyl-[protein] + CO2</text>
        <dbReference type="Rhea" id="RHEA:12188"/>
        <dbReference type="Rhea" id="RHEA-COMP:10474"/>
        <dbReference type="Rhea" id="RHEA-COMP:20092"/>
        <dbReference type="ChEBI" id="CHEBI:15378"/>
        <dbReference type="ChEBI" id="CHEBI:16526"/>
        <dbReference type="ChEBI" id="CHEBI:16810"/>
        <dbReference type="ChEBI" id="CHEBI:83099"/>
        <dbReference type="ChEBI" id="CHEBI:83120"/>
        <dbReference type="EC" id="1.2.4.2"/>
    </reaction>
</comment>
<comment type="cofactor">
    <cofactor evidence="1">
        <name>thiamine diphosphate</name>
        <dbReference type="ChEBI" id="CHEBI:58937"/>
    </cofactor>
</comment>
<comment type="subunit">
    <text evidence="1">Homodimer. Part of the 2-oxoglutarate dehydrogenase (OGDH) complex composed of E1 (2-oxoglutarate dehydrogenase), E2 (dihydrolipoamide succinyltransferase) and E3 (dihydrolipoamide dehydrogenase); the complex contains multiple copies of the three enzymatic components (E1, E2 and E3).</text>
</comment>
<comment type="similarity">
    <text evidence="1">Belongs to the alpha-ketoglutarate dehydrogenase family.</text>
</comment>
<name>ODO1_STAAM</name>
<proteinExistence type="inferred from homology"/>
<reference key="1">
    <citation type="submission" date="2003-05" db="EMBL/GenBank/DDBJ databases">
        <title>Genetic analysis of seventeen genes in Staphylococcus aureus with reduced susceptibility to vancomycin (VRSA) and hetero-VRSA (hVRSA).</title>
        <authorList>
            <person name="Wootton M."/>
            <person name="Avison M.B."/>
            <person name="Bennett P.M."/>
            <person name="Howe R.A."/>
            <person name="MacGowan A.P."/>
            <person name="Walsh T.R."/>
        </authorList>
    </citation>
    <scope>NUCLEOTIDE SEQUENCE [GENOMIC DNA]</scope>
</reference>
<reference key="2">
    <citation type="journal article" date="2001" name="Lancet">
        <title>Whole genome sequencing of meticillin-resistant Staphylococcus aureus.</title>
        <authorList>
            <person name="Kuroda M."/>
            <person name="Ohta T."/>
            <person name="Uchiyama I."/>
            <person name="Baba T."/>
            <person name="Yuzawa H."/>
            <person name="Kobayashi I."/>
            <person name="Cui L."/>
            <person name="Oguchi A."/>
            <person name="Aoki K."/>
            <person name="Nagai Y."/>
            <person name="Lian J.-Q."/>
            <person name="Ito T."/>
            <person name="Kanamori M."/>
            <person name="Matsumaru H."/>
            <person name="Maruyama A."/>
            <person name="Murakami H."/>
            <person name="Hosoyama A."/>
            <person name="Mizutani-Ui Y."/>
            <person name="Takahashi N.K."/>
            <person name="Sawano T."/>
            <person name="Inoue R."/>
            <person name="Kaito C."/>
            <person name="Sekimizu K."/>
            <person name="Hirakawa H."/>
            <person name="Kuhara S."/>
            <person name="Goto S."/>
            <person name="Yabuzaki J."/>
            <person name="Kanehisa M."/>
            <person name="Yamashita A."/>
            <person name="Oshima K."/>
            <person name="Furuya K."/>
            <person name="Yoshino C."/>
            <person name="Shiba T."/>
            <person name="Hattori M."/>
            <person name="Ogasawara N."/>
            <person name="Hayashi H."/>
            <person name="Hiramatsu K."/>
        </authorList>
    </citation>
    <scope>NUCLEOTIDE SEQUENCE [LARGE SCALE GENOMIC DNA]</scope>
    <source>
        <strain>Mu50 / ATCC 700699</strain>
    </source>
</reference>
<protein>
    <recommendedName>
        <fullName evidence="1">2-oxoglutarate dehydrogenase E1 component</fullName>
        <ecNumber evidence="1">1.2.4.2</ecNumber>
    </recommendedName>
    <alternativeName>
        <fullName evidence="1">Alpha-ketoglutarate dehydrogenase</fullName>
    </alternativeName>
</protein>
<accession>Q931R8</accession>
<accession>Q7ASB7</accession>
<accession>Q7WRN1</accession>
<accession>Q7WZ40</accession>